<sequence>MSVIKMTDLDLAGKRVLIRADLNVPVKDGKVTSDARIVATLPTIKLALEKGAKLMITSHLGRPTEGEYNEEFSLAPVVNYLKDALSCPVRLAKDYLDGVDVAAGELVVLENCRFNKGEKKNTEELAKKYAALCDVFVMDAFGTAHRAEGSTYGVAQFAPIACAGPLLAGELEALGKAMLKPERPMVAIVGGSKVSTKLTVLESLSKIADQLVVGGGIANTFIAAAGHNVGKSLCEHDLLDTAKKLAAETNIPVTTDVVVGTEFSESTPATIKSVSDVTDGDMIFDIGPDSAKALADIIMNAKTILWNGPVGVFEFDQFSAGTKVIAEAIAASPAFSIAGGGDTLAAIDKFGIADKVSYISTGGGAFLEFVEGKVLPAVAMLEQRAKA</sequence>
<reference key="1">
    <citation type="journal article" date="2008" name="BMC Genomics">
        <title>The genome of Aeromonas salmonicida subsp. salmonicida A449: insights into the evolution of a fish pathogen.</title>
        <authorList>
            <person name="Reith M.E."/>
            <person name="Singh R.K."/>
            <person name="Curtis B."/>
            <person name="Boyd J.M."/>
            <person name="Bouevitch A."/>
            <person name="Kimball J."/>
            <person name="Munholland J."/>
            <person name="Murphy C."/>
            <person name="Sarty D."/>
            <person name="Williams J."/>
            <person name="Nash J.H."/>
            <person name="Johnson S.C."/>
            <person name="Brown L.L."/>
        </authorList>
    </citation>
    <scope>NUCLEOTIDE SEQUENCE [LARGE SCALE GENOMIC DNA]</scope>
    <source>
        <strain>A449</strain>
    </source>
</reference>
<feature type="chain" id="PRO_1000057954" description="Phosphoglycerate kinase">
    <location>
        <begin position="1"/>
        <end position="387"/>
    </location>
</feature>
<feature type="binding site" evidence="1">
    <location>
        <begin position="21"/>
        <end position="23"/>
    </location>
    <ligand>
        <name>substrate</name>
    </ligand>
</feature>
<feature type="binding site" evidence="1">
    <location>
        <position position="36"/>
    </location>
    <ligand>
        <name>substrate</name>
    </ligand>
</feature>
<feature type="binding site" evidence="1">
    <location>
        <begin position="59"/>
        <end position="62"/>
    </location>
    <ligand>
        <name>substrate</name>
    </ligand>
</feature>
<feature type="binding site" evidence="1">
    <location>
        <position position="113"/>
    </location>
    <ligand>
        <name>substrate</name>
    </ligand>
</feature>
<feature type="binding site" evidence="1">
    <location>
        <position position="146"/>
    </location>
    <ligand>
        <name>substrate</name>
    </ligand>
</feature>
<feature type="binding site" evidence="1">
    <location>
        <position position="197"/>
    </location>
    <ligand>
        <name>ATP</name>
        <dbReference type="ChEBI" id="CHEBI:30616"/>
    </ligand>
</feature>
<feature type="binding site" evidence="1">
    <location>
        <position position="314"/>
    </location>
    <ligand>
        <name>ATP</name>
        <dbReference type="ChEBI" id="CHEBI:30616"/>
    </ligand>
</feature>
<feature type="binding site" evidence="1">
    <location>
        <begin position="340"/>
        <end position="343"/>
    </location>
    <ligand>
        <name>ATP</name>
        <dbReference type="ChEBI" id="CHEBI:30616"/>
    </ligand>
</feature>
<gene>
    <name evidence="1" type="primary">pgk</name>
    <name type="ordered locus">ASA_3505</name>
</gene>
<proteinExistence type="inferred from homology"/>
<protein>
    <recommendedName>
        <fullName evidence="1">Phosphoglycerate kinase</fullName>
        <ecNumber evidence="1">2.7.2.3</ecNumber>
    </recommendedName>
</protein>
<name>PGK_AERS4</name>
<organism>
    <name type="scientific">Aeromonas salmonicida (strain A449)</name>
    <dbReference type="NCBI Taxonomy" id="382245"/>
    <lineage>
        <taxon>Bacteria</taxon>
        <taxon>Pseudomonadati</taxon>
        <taxon>Pseudomonadota</taxon>
        <taxon>Gammaproteobacteria</taxon>
        <taxon>Aeromonadales</taxon>
        <taxon>Aeromonadaceae</taxon>
        <taxon>Aeromonas</taxon>
    </lineage>
</organism>
<comment type="catalytic activity">
    <reaction evidence="1">
        <text>(2R)-3-phosphoglycerate + ATP = (2R)-3-phospho-glyceroyl phosphate + ADP</text>
        <dbReference type="Rhea" id="RHEA:14801"/>
        <dbReference type="ChEBI" id="CHEBI:30616"/>
        <dbReference type="ChEBI" id="CHEBI:57604"/>
        <dbReference type="ChEBI" id="CHEBI:58272"/>
        <dbReference type="ChEBI" id="CHEBI:456216"/>
        <dbReference type="EC" id="2.7.2.3"/>
    </reaction>
</comment>
<comment type="pathway">
    <text evidence="1">Carbohydrate degradation; glycolysis; pyruvate from D-glyceraldehyde 3-phosphate: step 2/5.</text>
</comment>
<comment type="subunit">
    <text evidence="1">Monomer.</text>
</comment>
<comment type="subcellular location">
    <subcellularLocation>
        <location evidence="1">Cytoplasm</location>
    </subcellularLocation>
</comment>
<comment type="similarity">
    <text evidence="1">Belongs to the phosphoglycerate kinase family.</text>
</comment>
<evidence type="ECO:0000255" key="1">
    <source>
        <dbReference type="HAMAP-Rule" id="MF_00145"/>
    </source>
</evidence>
<keyword id="KW-0067">ATP-binding</keyword>
<keyword id="KW-0963">Cytoplasm</keyword>
<keyword id="KW-0324">Glycolysis</keyword>
<keyword id="KW-0418">Kinase</keyword>
<keyword id="KW-0547">Nucleotide-binding</keyword>
<keyword id="KW-0808">Transferase</keyword>
<accession>A4SRF1</accession>
<dbReference type="EC" id="2.7.2.3" evidence="1"/>
<dbReference type="EMBL" id="CP000644">
    <property type="protein sequence ID" value="ABO91473.1"/>
    <property type="molecule type" value="Genomic_DNA"/>
</dbReference>
<dbReference type="RefSeq" id="WP_005318809.1">
    <property type="nucleotide sequence ID" value="NC_009348.1"/>
</dbReference>
<dbReference type="SMR" id="A4SRF1"/>
<dbReference type="STRING" id="29491.GCA_000820065_02051"/>
<dbReference type="KEGG" id="asa:ASA_3505"/>
<dbReference type="eggNOG" id="COG0126">
    <property type="taxonomic scope" value="Bacteria"/>
</dbReference>
<dbReference type="HOGENOM" id="CLU_025427_0_2_6"/>
<dbReference type="UniPathway" id="UPA00109">
    <property type="reaction ID" value="UER00185"/>
</dbReference>
<dbReference type="Proteomes" id="UP000000225">
    <property type="component" value="Chromosome"/>
</dbReference>
<dbReference type="GO" id="GO:0005829">
    <property type="term" value="C:cytosol"/>
    <property type="evidence" value="ECO:0007669"/>
    <property type="project" value="TreeGrafter"/>
</dbReference>
<dbReference type="GO" id="GO:0043531">
    <property type="term" value="F:ADP binding"/>
    <property type="evidence" value="ECO:0007669"/>
    <property type="project" value="TreeGrafter"/>
</dbReference>
<dbReference type="GO" id="GO:0005524">
    <property type="term" value="F:ATP binding"/>
    <property type="evidence" value="ECO:0007669"/>
    <property type="project" value="UniProtKB-KW"/>
</dbReference>
<dbReference type="GO" id="GO:0004618">
    <property type="term" value="F:phosphoglycerate kinase activity"/>
    <property type="evidence" value="ECO:0007669"/>
    <property type="project" value="UniProtKB-UniRule"/>
</dbReference>
<dbReference type="GO" id="GO:0006094">
    <property type="term" value="P:gluconeogenesis"/>
    <property type="evidence" value="ECO:0007669"/>
    <property type="project" value="TreeGrafter"/>
</dbReference>
<dbReference type="GO" id="GO:0006096">
    <property type="term" value="P:glycolytic process"/>
    <property type="evidence" value="ECO:0007669"/>
    <property type="project" value="UniProtKB-UniRule"/>
</dbReference>
<dbReference type="FunFam" id="3.40.50.1260:FF:000001">
    <property type="entry name" value="Phosphoglycerate kinase"/>
    <property type="match status" value="1"/>
</dbReference>
<dbReference type="FunFam" id="3.40.50.1260:FF:000002">
    <property type="entry name" value="Phosphoglycerate kinase"/>
    <property type="match status" value="1"/>
</dbReference>
<dbReference type="Gene3D" id="3.40.50.1260">
    <property type="entry name" value="Phosphoglycerate kinase, N-terminal domain"/>
    <property type="match status" value="2"/>
</dbReference>
<dbReference type="HAMAP" id="MF_00145">
    <property type="entry name" value="Phosphoglyc_kinase"/>
    <property type="match status" value="1"/>
</dbReference>
<dbReference type="InterPro" id="IPR001576">
    <property type="entry name" value="Phosphoglycerate_kinase"/>
</dbReference>
<dbReference type="InterPro" id="IPR015911">
    <property type="entry name" value="Phosphoglycerate_kinase_CS"/>
</dbReference>
<dbReference type="InterPro" id="IPR015824">
    <property type="entry name" value="Phosphoglycerate_kinase_N"/>
</dbReference>
<dbReference type="InterPro" id="IPR036043">
    <property type="entry name" value="Phosphoglycerate_kinase_sf"/>
</dbReference>
<dbReference type="PANTHER" id="PTHR11406">
    <property type="entry name" value="PHOSPHOGLYCERATE KINASE"/>
    <property type="match status" value="1"/>
</dbReference>
<dbReference type="PANTHER" id="PTHR11406:SF23">
    <property type="entry name" value="PHOSPHOGLYCERATE KINASE 1, CHLOROPLASTIC-RELATED"/>
    <property type="match status" value="1"/>
</dbReference>
<dbReference type="Pfam" id="PF00162">
    <property type="entry name" value="PGK"/>
    <property type="match status" value="1"/>
</dbReference>
<dbReference type="PIRSF" id="PIRSF000724">
    <property type="entry name" value="Pgk"/>
    <property type="match status" value="1"/>
</dbReference>
<dbReference type="PRINTS" id="PR00477">
    <property type="entry name" value="PHGLYCKINASE"/>
</dbReference>
<dbReference type="SUPFAM" id="SSF53748">
    <property type="entry name" value="Phosphoglycerate kinase"/>
    <property type="match status" value="1"/>
</dbReference>
<dbReference type="PROSITE" id="PS00111">
    <property type="entry name" value="PGLYCERATE_KINASE"/>
    <property type="match status" value="1"/>
</dbReference>